<dbReference type="EMBL" id="BC102758">
    <property type="protein sequence ID" value="AAI02759.1"/>
    <property type="molecule type" value="mRNA"/>
</dbReference>
<dbReference type="RefSeq" id="NP_001029416.1">
    <property type="nucleotide sequence ID" value="NM_001034244.1"/>
</dbReference>
<dbReference type="RefSeq" id="XP_005220048.1">
    <property type="nucleotide sequence ID" value="XM_005219991.5"/>
</dbReference>
<dbReference type="BMRB" id="Q3SZP8"/>
<dbReference type="SMR" id="Q3SZP8"/>
<dbReference type="FunCoup" id="Q3SZP8">
    <property type="interactions" value="2674"/>
</dbReference>
<dbReference type="STRING" id="9913.ENSBTAP00000019537"/>
<dbReference type="PaxDb" id="9913-ENSBTAP00000019537"/>
<dbReference type="Ensembl" id="ENSBTAT00000019537.4">
    <property type="protein sequence ID" value="ENSBTAP00000019537.3"/>
    <property type="gene ID" value="ENSBTAG00000014677.5"/>
</dbReference>
<dbReference type="GeneID" id="505401"/>
<dbReference type="KEGG" id="bta:505401"/>
<dbReference type="CTD" id="6871"/>
<dbReference type="VEuPathDB" id="HostDB:ENSBTAG00000014677"/>
<dbReference type="VGNC" id="VGNC:35565">
    <property type="gene designation" value="TADA2A"/>
</dbReference>
<dbReference type="eggNOG" id="KOG0457">
    <property type="taxonomic scope" value="Eukaryota"/>
</dbReference>
<dbReference type="GeneTree" id="ENSGT00940000156751"/>
<dbReference type="HOGENOM" id="CLU_018273_2_1_1"/>
<dbReference type="InParanoid" id="Q3SZP8"/>
<dbReference type="OMA" id="YNGNHRP"/>
<dbReference type="OrthoDB" id="270417at2759"/>
<dbReference type="TreeFam" id="TF313975"/>
<dbReference type="Reactome" id="R-BTA-9772755">
    <property type="pathway name" value="Formation of WDR5-containing histone-modifying complexes"/>
</dbReference>
<dbReference type="Proteomes" id="UP000009136">
    <property type="component" value="Chromosome 19"/>
</dbReference>
<dbReference type="Bgee" id="ENSBTAG00000014677">
    <property type="expression patterns" value="Expressed in oocyte and 104 other cell types or tissues"/>
</dbReference>
<dbReference type="GO" id="GO:0140672">
    <property type="term" value="C:ATAC complex"/>
    <property type="evidence" value="ECO:0007669"/>
    <property type="project" value="Ensembl"/>
</dbReference>
<dbReference type="GO" id="GO:0072686">
    <property type="term" value="C:mitotic spindle"/>
    <property type="evidence" value="ECO:0007669"/>
    <property type="project" value="Ensembl"/>
</dbReference>
<dbReference type="GO" id="GO:0005634">
    <property type="term" value="C:nucleus"/>
    <property type="evidence" value="ECO:0000318"/>
    <property type="project" value="GO_Central"/>
</dbReference>
<dbReference type="GO" id="GO:0070461">
    <property type="term" value="C:SAGA-type complex"/>
    <property type="evidence" value="ECO:0000318"/>
    <property type="project" value="GO_Central"/>
</dbReference>
<dbReference type="GO" id="GO:0003682">
    <property type="term" value="F:chromatin binding"/>
    <property type="evidence" value="ECO:0000318"/>
    <property type="project" value="GO_Central"/>
</dbReference>
<dbReference type="GO" id="GO:0003677">
    <property type="term" value="F:DNA binding"/>
    <property type="evidence" value="ECO:0007669"/>
    <property type="project" value="UniProtKB-KW"/>
</dbReference>
<dbReference type="GO" id="GO:0003713">
    <property type="term" value="F:transcription coactivator activity"/>
    <property type="evidence" value="ECO:0000318"/>
    <property type="project" value="GO_Central"/>
</dbReference>
<dbReference type="GO" id="GO:0008270">
    <property type="term" value="F:zinc ion binding"/>
    <property type="evidence" value="ECO:0007669"/>
    <property type="project" value="UniProtKB-KW"/>
</dbReference>
<dbReference type="GO" id="GO:0006338">
    <property type="term" value="P:chromatin remodeling"/>
    <property type="evidence" value="ECO:0000318"/>
    <property type="project" value="GO_Central"/>
</dbReference>
<dbReference type="GO" id="GO:0000278">
    <property type="term" value="P:mitotic cell cycle"/>
    <property type="evidence" value="ECO:0007669"/>
    <property type="project" value="Ensembl"/>
</dbReference>
<dbReference type="GO" id="GO:0051726">
    <property type="term" value="P:regulation of cell cycle"/>
    <property type="evidence" value="ECO:0007669"/>
    <property type="project" value="Ensembl"/>
</dbReference>
<dbReference type="GO" id="GO:0051302">
    <property type="term" value="P:regulation of cell division"/>
    <property type="evidence" value="ECO:0007669"/>
    <property type="project" value="Ensembl"/>
</dbReference>
<dbReference type="GO" id="GO:0045995">
    <property type="term" value="P:regulation of embryonic development"/>
    <property type="evidence" value="ECO:0007669"/>
    <property type="project" value="Ensembl"/>
</dbReference>
<dbReference type="GO" id="GO:0031647">
    <property type="term" value="P:regulation of protein stability"/>
    <property type="evidence" value="ECO:0007669"/>
    <property type="project" value="Ensembl"/>
</dbReference>
<dbReference type="GO" id="GO:0006357">
    <property type="term" value="P:regulation of transcription by RNA polymerase II"/>
    <property type="evidence" value="ECO:0000318"/>
    <property type="project" value="GO_Central"/>
</dbReference>
<dbReference type="CDD" id="cd00167">
    <property type="entry name" value="SANT"/>
    <property type="match status" value="1"/>
</dbReference>
<dbReference type="CDD" id="cd02335">
    <property type="entry name" value="ZZ_ADA2"/>
    <property type="match status" value="1"/>
</dbReference>
<dbReference type="FunFam" id="1.10.10.60:FF:000110">
    <property type="entry name" value="Transcriptional adapter"/>
    <property type="match status" value="1"/>
</dbReference>
<dbReference type="FunFam" id="3.30.60.90:FF:000020">
    <property type="entry name" value="Transcriptional adapter"/>
    <property type="match status" value="1"/>
</dbReference>
<dbReference type="FunFam" id="1.10.10.10:FF:000087">
    <property type="entry name" value="Transcriptional adapter 2"/>
    <property type="match status" value="1"/>
</dbReference>
<dbReference type="Gene3D" id="3.30.60.90">
    <property type="match status" value="1"/>
</dbReference>
<dbReference type="Gene3D" id="1.10.10.60">
    <property type="entry name" value="Homeodomain-like"/>
    <property type="match status" value="1"/>
</dbReference>
<dbReference type="Gene3D" id="1.10.10.10">
    <property type="entry name" value="Winged helix-like DNA-binding domain superfamily/Winged helix DNA-binding domain"/>
    <property type="match status" value="1"/>
</dbReference>
<dbReference type="InterPro" id="IPR041983">
    <property type="entry name" value="ADA2-like_ZZ"/>
</dbReference>
<dbReference type="InterPro" id="IPR016827">
    <property type="entry name" value="Ada2/TADA2"/>
</dbReference>
<dbReference type="InterPro" id="IPR009057">
    <property type="entry name" value="Homeodomain-like_sf"/>
</dbReference>
<dbReference type="InterPro" id="IPR017930">
    <property type="entry name" value="Myb_dom"/>
</dbReference>
<dbReference type="InterPro" id="IPR001005">
    <property type="entry name" value="SANT/Myb"/>
</dbReference>
<dbReference type="InterPro" id="IPR017884">
    <property type="entry name" value="SANT_dom"/>
</dbReference>
<dbReference type="InterPro" id="IPR007526">
    <property type="entry name" value="SWIRM"/>
</dbReference>
<dbReference type="InterPro" id="IPR055141">
    <property type="entry name" value="TADA2A_B-like_dom"/>
</dbReference>
<dbReference type="InterPro" id="IPR036388">
    <property type="entry name" value="WH-like_DNA-bd_sf"/>
</dbReference>
<dbReference type="InterPro" id="IPR000433">
    <property type="entry name" value="Znf_ZZ"/>
</dbReference>
<dbReference type="InterPro" id="IPR043145">
    <property type="entry name" value="Znf_ZZ_sf"/>
</dbReference>
<dbReference type="PANTHER" id="PTHR12374:SF20">
    <property type="entry name" value="TRANSCRIPTIONAL ADAPTER 2-ALPHA"/>
    <property type="match status" value="1"/>
</dbReference>
<dbReference type="PANTHER" id="PTHR12374">
    <property type="entry name" value="TRANSCRIPTIONAL ADAPTOR 2 ADA2 -RELATED"/>
    <property type="match status" value="1"/>
</dbReference>
<dbReference type="Pfam" id="PF00249">
    <property type="entry name" value="Myb_DNA-binding"/>
    <property type="match status" value="1"/>
</dbReference>
<dbReference type="Pfam" id="PF04433">
    <property type="entry name" value="SWIRM"/>
    <property type="match status" value="1"/>
</dbReference>
<dbReference type="Pfam" id="PF22941">
    <property type="entry name" value="TADA2A-like_3rd"/>
    <property type="match status" value="1"/>
</dbReference>
<dbReference type="Pfam" id="PF25299">
    <property type="entry name" value="ZZ_ADA2"/>
    <property type="match status" value="1"/>
</dbReference>
<dbReference type="PIRSF" id="PIRSF025024">
    <property type="entry name" value="Transcriptional_adaptor_2"/>
    <property type="match status" value="1"/>
</dbReference>
<dbReference type="SMART" id="SM00717">
    <property type="entry name" value="SANT"/>
    <property type="match status" value="1"/>
</dbReference>
<dbReference type="SUPFAM" id="SSF46689">
    <property type="entry name" value="Homeodomain-like"/>
    <property type="match status" value="2"/>
</dbReference>
<dbReference type="SUPFAM" id="SSF57850">
    <property type="entry name" value="RING/U-box"/>
    <property type="match status" value="1"/>
</dbReference>
<dbReference type="PROSITE" id="PS51293">
    <property type="entry name" value="SANT"/>
    <property type="match status" value="1"/>
</dbReference>
<dbReference type="PROSITE" id="PS50934">
    <property type="entry name" value="SWIRM"/>
    <property type="match status" value="1"/>
</dbReference>
<dbReference type="PROSITE" id="PS50135">
    <property type="entry name" value="ZF_ZZ_2"/>
    <property type="match status" value="1"/>
</dbReference>
<proteinExistence type="evidence at transcript level"/>
<protein>
    <recommendedName>
        <fullName>Transcriptional adapter 2-alpha</fullName>
    </recommendedName>
    <alternativeName>
        <fullName>Transcriptional adapter 2-like</fullName>
        <shortName>ADA2-like protein</shortName>
    </alternativeName>
</protein>
<accession>Q3SZP8</accession>
<sequence>MDRLGSFSSDPSDKPPCRGCSSYLMEPYIKCAECGPPPFFLCLQCFTRGFEYKKHQSDHTYEIMTSDFPVLDPSWTAQEEMALLEAVMDCGFGNWQDVANQMCTKTKEECEKHYMKHFINNPLFASTLLNLKQAEEAKTADTAIPFHSADDPPRPTFDSLLSRDMAGYMPARADFIEEFDNYAEWDLRDIDFVEDDSDILHALKMAVVDIYHSRLKERQRRKKIIRDHGLINLRKFQLMERRYPKEVQDLYETMRRFARIVGPVEHDKFIESHALEFELRREIKRLQEYRTAGITNFCSARTYDHLKKTREEERLKRTMLSEVLQYIQDSSACQQWLRRQADIDSGLSPSVPMTSNSGRRSAPPLNLTGLPGTEKLNEKEKELCQMVRLVPGAYLEYKSALLNECNKQGGLRLAQARALIKIDVNKTRKIYDFLIREGYITKA</sequence>
<name>TAD2A_BOVIN</name>
<gene>
    <name type="primary">TADA2A</name>
    <name type="synonym">TADA2L</name>
</gene>
<evidence type="ECO:0000250" key="1"/>
<evidence type="ECO:0000250" key="2">
    <source>
        <dbReference type="UniProtKB" id="O75478"/>
    </source>
</evidence>
<evidence type="ECO:0000250" key="3">
    <source>
        <dbReference type="UniProtKB" id="Q8CHV6"/>
    </source>
</evidence>
<evidence type="ECO:0000255" key="4">
    <source>
        <dbReference type="PROSITE-ProRule" id="PRU00228"/>
    </source>
</evidence>
<evidence type="ECO:0000255" key="5">
    <source>
        <dbReference type="PROSITE-ProRule" id="PRU00247"/>
    </source>
</evidence>
<evidence type="ECO:0000255" key="6">
    <source>
        <dbReference type="PROSITE-ProRule" id="PRU00624"/>
    </source>
</evidence>
<evidence type="ECO:0000256" key="7">
    <source>
        <dbReference type="SAM" id="MobiDB-lite"/>
    </source>
</evidence>
<organism>
    <name type="scientific">Bos taurus</name>
    <name type="common">Bovine</name>
    <dbReference type="NCBI Taxonomy" id="9913"/>
    <lineage>
        <taxon>Eukaryota</taxon>
        <taxon>Metazoa</taxon>
        <taxon>Chordata</taxon>
        <taxon>Craniata</taxon>
        <taxon>Vertebrata</taxon>
        <taxon>Euteleostomi</taxon>
        <taxon>Mammalia</taxon>
        <taxon>Eutheria</taxon>
        <taxon>Laurasiatheria</taxon>
        <taxon>Artiodactyla</taxon>
        <taxon>Ruminantia</taxon>
        <taxon>Pecora</taxon>
        <taxon>Bovidae</taxon>
        <taxon>Bovinae</taxon>
        <taxon>Bos</taxon>
    </lineage>
</organism>
<comment type="function">
    <text evidence="2 3">Component of the ATAC complex, a complex with histone acetyltransferase activity on histones H3 and H4. Required for the function of some acidic activation domains, which activate transcription from a distant site. Binds double-stranded DNA. Binds dinucleosomes, probably at the linker region between neighboring nucleosomes. Plays a role in chromatin remodeling. May promote TP53/p53 'Lys-321' acetylation, leading to reduced TP53 stability and transcriptional activity. May also promote XRCC6 acetylation thus facilitating cell apoptosis in response to DNA damage.</text>
</comment>
<comment type="subunit">
    <text evidence="2">Interacts with GCN5 and NR3C1. Associated with the P/CAF protein in the PCAF complex. Component of the PCAF complex, at least composed of TADA2L/ADA2, TADA3L/ADA3, TAF5L/PAF65-beta, TAF6L/PAF65-alpha, TAF10/TAFII30, TAF12/TAFII20, TAF9/TAFII31 and TRRAP. Component of the ADA2A-containing complex (ATAC), composed of KAT14, KAT2A, TADA2L, TADA3L, ZZ3, MBIP, WDR5, YEATS2, CCDC101 and DR1. Interacts with CCDC134.</text>
</comment>
<comment type="subcellular location">
    <subcellularLocation>
        <location evidence="6">Nucleus</location>
    </subcellularLocation>
    <subcellularLocation>
        <location evidence="3">Chromosome</location>
    </subcellularLocation>
</comment>
<keyword id="KW-0158">Chromosome</keyword>
<keyword id="KW-0238">DNA-binding</keyword>
<keyword id="KW-1017">Isopeptide bond</keyword>
<keyword id="KW-0479">Metal-binding</keyword>
<keyword id="KW-0539">Nucleus</keyword>
<keyword id="KW-0597">Phosphoprotein</keyword>
<keyword id="KW-1185">Reference proteome</keyword>
<keyword id="KW-0804">Transcription</keyword>
<keyword id="KW-0805">Transcription regulation</keyword>
<keyword id="KW-0832">Ubl conjugation</keyword>
<keyword id="KW-0862">Zinc</keyword>
<keyword id="KW-0863">Zinc-finger</keyword>
<feature type="chain" id="PRO_0000240668" description="Transcriptional adapter 2-alpha">
    <location>
        <begin position="1"/>
        <end position="443"/>
    </location>
</feature>
<feature type="domain" description="SANT" evidence="6">
    <location>
        <begin position="70"/>
        <end position="122"/>
    </location>
</feature>
<feature type="domain" description="SWIRM" evidence="5">
    <location>
        <begin position="356"/>
        <end position="443"/>
    </location>
</feature>
<feature type="zinc finger region" description="ZZ-type" evidence="4">
    <location>
        <begin position="12"/>
        <end position="69"/>
    </location>
</feature>
<feature type="DNA-binding region" evidence="1">
    <location>
        <begin position="426"/>
        <end position="435"/>
    </location>
</feature>
<feature type="region of interest" description="Disordered" evidence="7">
    <location>
        <begin position="347"/>
        <end position="372"/>
    </location>
</feature>
<feature type="compositionally biased region" description="Polar residues" evidence="7">
    <location>
        <begin position="347"/>
        <end position="359"/>
    </location>
</feature>
<feature type="binding site" evidence="4">
    <location>
        <position position="17"/>
    </location>
    <ligand>
        <name>Zn(2+)</name>
        <dbReference type="ChEBI" id="CHEBI:29105"/>
        <label>1</label>
    </ligand>
</feature>
<feature type="binding site" evidence="4">
    <location>
        <position position="20"/>
    </location>
    <ligand>
        <name>Zn(2+)</name>
        <dbReference type="ChEBI" id="CHEBI:29105"/>
        <label>1</label>
    </ligand>
</feature>
<feature type="binding site" evidence="4">
    <location>
        <position position="31"/>
    </location>
    <ligand>
        <name>Zn(2+)</name>
        <dbReference type="ChEBI" id="CHEBI:29105"/>
        <label>2</label>
    </ligand>
</feature>
<feature type="binding site" evidence="4">
    <location>
        <position position="34"/>
    </location>
    <ligand>
        <name>Zn(2+)</name>
        <dbReference type="ChEBI" id="CHEBI:29105"/>
        <label>2</label>
    </ligand>
</feature>
<feature type="binding site" evidence="4">
    <location>
        <position position="42"/>
    </location>
    <ligand>
        <name>Zn(2+)</name>
        <dbReference type="ChEBI" id="CHEBI:29105"/>
        <label>1</label>
    </ligand>
</feature>
<feature type="binding site" evidence="4">
    <location>
        <position position="45"/>
    </location>
    <ligand>
        <name>Zn(2+)</name>
        <dbReference type="ChEBI" id="CHEBI:29105"/>
        <label>1</label>
    </ligand>
</feature>
<feature type="binding site" evidence="4">
    <location>
        <position position="55"/>
    </location>
    <ligand>
        <name>Zn(2+)</name>
        <dbReference type="ChEBI" id="CHEBI:29105"/>
        <label>2</label>
    </ligand>
</feature>
<feature type="binding site" evidence="4">
    <location>
        <position position="59"/>
    </location>
    <ligand>
        <name>Zn(2+)</name>
        <dbReference type="ChEBI" id="CHEBI:29105"/>
        <label>2</label>
    </ligand>
</feature>
<feature type="modified residue" description="Phosphoserine" evidence="2">
    <location>
        <position position="6"/>
    </location>
</feature>
<feature type="cross-link" description="Glycyl lysine isopeptide (Lys-Gly) (interchain with G-Cter in SUMO2)" evidence="2">
    <location>
        <position position="132"/>
    </location>
</feature>
<feature type="cross-link" description="Glycyl lysine isopeptide (Lys-Gly) (interchain with G-Cter in SUMO2)" evidence="2">
    <location>
        <position position="138"/>
    </location>
</feature>
<reference key="1">
    <citation type="submission" date="2005-08" db="EMBL/GenBank/DDBJ databases">
        <authorList>
            <consortium name="NIH - Mammalian Gene Collection (MGC) project"/>
        </authorList>
    </citation>
    <scope>NUCLEOTIDE SEQUENCE [LARGE SCALE MRNA]</scope>
    <source>
        <strain>Crossbred X Angus</strain>
        <tissue>Ileum</tissue>
    </source>
</reference>